<feature type="chain" id="PRO_0000090812" description="Acetolactate synthase large subunit">
    <location>
        <begin position="1"/>
        <end position="590"/>
    </location>
</feature>
<feature type="region of interest" description="Thiamine pyrophosphate binding">
    <location>
        <begin position="405"/>
        <end position="484"/>
    </location>
</feature>
<feature type="binding site" evidence="1">
    <location>
        <position position="61"/>
    </location>
    <ligand>
        <name>thiamine diphosphate</name>
        <dbReference type="ChEBI" id="CHEBI:58937"/>
    </ligand>
</feature>
<feature type="binding site" evidence="1">
    <location>
        <position position="163"/>
    </location>
    <ligand>
        <name>FAD</name>
        <dbReference type="ChEBI" id="CHEBI:57692"/>
    </ligand>
</feature>
<feature type="binding site" evidence="1">
    <location>
        <begin position="271"/>
        <end position="292"/>
    </location>
    <ligand>
        <name>FAD</name>
        <dbReference type="ChEBI" id="CHEBI:57692"/>
    </ligand>
</feature>
<feature type="binding site" evidence="1">
    <location>
        <begin position="314"/>
        <end position="333"/>
    </location>
    <ligand>
        <name>FAD</name>
        <dbReference type="ChEBI" id="CHEBI:57692"/>
    </ligand>
</feature>
<feature type="binding site" evidence="1">
    <location>
        <position position="455"/>
    </location>
    <ligand>
        <name>Mg(2+)</name>
        <dbReference type="ChEBI" id="CHEBI:18420"/>
    </ligand>
</feature>
<feature type="binding site" evidence="1">
    <location>
        <position position="482"/>
    </location>
    <ligand>
        <name>Mg(2+)</name>
        <dbReference type="ChEBI" id="CHEBI:18420"/>
    </ligand>
</feature>
<proteinExistence type="inferred from homology"/>
<geneLocation type="chloroplast"/>
<sequence length="590" mass="64930">MLSKQIIGSEKTGRFALLDSIVRHGVIHIFGYPGGAILPIYDELYAWEELSLIKNILVRHEQGASHAADAYSRSTGKVGVCFATSGPGATNLVSGIATAHIDSVPILAITGQVGRPFIGTDAFQEVDIFGITLPIVKHSYVVRDPRDMSRIVAEAFYICKHGRPGPVLIDVPKDVGLEKFNYFSVEPGQVKIPGCRPLSNLKSRQILMAAKMIQQSSQPLLYIGGGAIISDAHSIIKELVDLYKIPVTTTLMGKGIFNEDSEFCLGMLGMHGTAYANFAVSECDLLIALGARFDDRVTGKLDEFACNAQVIHVDIDPAEVGKNRIPQVAIVGDVTEVVTSLLNLLKNNFKPYPEQIISWQERIHRWRQQYPLLVPKKSTSISPQEILVTTNQLAQDAYFTTDVGQHQMWSAQFLKVKSKHWISSAGLGTMGYGLPAAIGAQVAHPNELVICVSGDSSFQMNMQELGTIAQYKLPIKIVIINNRWQGMVRQWQQAFYGERYSHSRMTEGAPNFQKLAEAFGIKAFTVNNRQNMESSLKDAMKYPGPVLLDCQVTENENCYPMVAPGKSNAQMIGIAKPQRGTASNYVSRNI</sequence>
<keyword id="KW-0028">Amino-acid biosynthesis</keyword>
<keyword id="KW-0100">Branched-chain amino acid biosynthesis</keyword>
<keyword id="KW-0150">Chloroplast</keyword>
<keyword id="KW-0274">FAD</keyword>
<keyword id="KW-0285">Flavoprotein</keyword>
<keyword id="KW-0460">Magnesium</keyword>
<keyword id="KW-0479">Metal-binding</keyword>
<keyword id="KW-0934">Plastid</keyword>
<keyword id="KW-0786">Thiamine pyrophosphate</keyword>
<keyword id="KW-0808">Transferase</keyword>
<dbReference type="EC" id="2.2.1.6"/>
<dbReference type="EMBL" id="M94625">
    <property type="protein sequence ID" value="AAA03052.1"/>
    <property type="molecule type" value="Unassigned_DNA"/>
</dbReference>
<dbReference type="PIR" id="S28920">
    <property type="entry name" value="S28920"/>
</dbReference>
<dbReference type="SMR" id="P69684"/>
<dbReference type="OrthoDB" id="16262at2759"/>
<dbReference type="UniPathway" id="UPA00047">
    <property type="reaction ID" value="UER00055"/>
</dbReference>
<dbReference type="UniPathway" id="UPA00049">
    <property type="reaction ID" value="UER00059"/>
</dbReference>
<dbReference type="GO" id="GO:0005948">
    <property type="term" value="C:acetolactate synthase complex"/>
    <property type="evidence" value="ECO:0007669"/>
    <property type="project" value="TreeGrafter"/>
</dbReference>
<dbReference type="GO" id="GO:0009507">
    <property type="term" value="C:chloroplast"/>
    <property type="evidence" value="ECO:0007669"/>
    <property type="project" value="UniProtKB-SubCell"/>
</dbReference>
<dbReference type="GO" id="GO:0003984">
    <property type="term" value="F:acetolactate synthase activity"/>
    <property type="evidence" value="ECO:0007669"/>
    <property type="project" value="UniProtKB-EC"/>
</dbReference>
<dbReference type="GO" id="GO:0050660">
    <property type="term" value="F:flavin adenine dinucleotide binding"/>
    <property type="evidence" value="ECO:0007669"/>
    <property type="project" value="InterPro"/>
</dbReference>
<dbReference type="GO" id="GO:0000287">
    <property type="term" value="F:magnesium ion binding"/>
    <property type="evidence" value="ECO:0007669"/>
    <property type="project" value="InterPro"/>
</dbReference>
<dbReference type="GO" id="GO:0030976">
    <property type="term" value="F:thiamine pyrophosphate binding"/>
    <property type="evidence" value="ECO:0007669"/>
    <property type="project" value="InterPro"/>
</dbReference>
<dbReference type="GO" id="GO:0009097">
    <property type="term" value="P:isoleucine biosynthetic process"/>
    <property type="evidence" value="ECO:0007669"/>
    <property type="project" value="UniProtKB-UniPathway"/>
</dbReference>
<dbReference type="GO" id="GO:0009099">
    <property type="term" value="P:L-valine biosynthetic process"/>
    <property type="evidence" value="ECO:0007669"/>
    <property type="project" value="UniProtKB-UniPathway"/>
</dbReference>
<dbReference type="CDD" id="cd02015">
    <property type="entry name" value="TPP_AHAS"/>
    <property type="match status" value="1"/>
</dbReference>
<dbReference type="CDD" id="cd07035">
    <property type="entry name" value="TPP_PYR_POX_like"/>
    <property type="match status" value="1"/>
</dbReference>
<dbReference type="FunFam" id="3.40.50.1220:FF:000008">
    <property type="entry name" value="Acetolactate synthase"/>
    <property type="match status" value="1"/>
</dbReference>
<dbReference type="FunFam" id="3.40.50.970:FF:000007">
    <property type="entry name" value="Acetolactate synthase"/>
    <property type="match status" value="1"/>
</dbReference>
<dbReference type="Gene3D" id="3.40.50.970">
    <property type="match status" value="2"/>
</dbReference>
<dbReference type="Gene3D" id="3.40.50.1220">
    <property type="entry name" value="TPP-binding domain"/>
    <property type="match status" value="1"/>
</dbReference>
<dbReference type="InterPro" id="IPR012846">
    <property type="entry name" value="Acetolactate_synth_lsu"/>
</dbReference>
<dbReference type="InterPro" id="IPR039368">
    <property type="entry name" value="AHAS_TPP"/>
</dbReference>
<dbReference type="InterPro" id="IPR029035">
    <property type="entry name" value="DHS-like_NAD/FAD-binding_dom"/>
</dbReference>
<dbReference type="InterPro" id="IPR029061">
    <property type="entry name" value="THDP-binding"/>
</dbReference>
<dbReference type="InterPro" id="IPR012000">
    <property type="entry name" value="Thiamin_PyroP_enz_cen_dom"/>
</dbReference>
<dbReference type="InterPro" id="IPR012001">
    <property type="entry name" value="Thiamin_PyroP_enz_TPP-bd_dom"/>
</dbReference>
<dbReference type="InterPro" id="IPR000399">
    <property type="entry name" value="TPP-bd_CS"/>
</dbReference>
<dbReference type="InterPro" id="IPR045229">
    <property type="entry name" value="TPP_enz"/>
</dbReference>
<dbReference type="InterPro" id="IPR011766">
    <property type="entry name" value="TPP_enzyme_TPP-bd"/>
</dbReference>
<dbReference type="NCBIfam" id="TIGR00118">
    <property type="entry name" value="acolac_lg"/>
    <property type="match status" value="1"/>
</dbReference>
<dbReference type="NCBIfam" id="NF005651">
    <property type="entry name" value="PRK07418.1"/>
    <property type="match status" value="1"/>
</dbReference>
<dbReference type="PANTHER" id="PTHR18968:SF13">
    <property type="entry name" value="ACETOLACTATE SYNTHASE CATALYTIC SUBUNIT, MITOCHONDRIAL"/>
    <property type="match status" value="1"/>
</dbReference>
<dbReference type="PANTHER" id="PTHR18968">
    <property type="entry name" value="THIAMINE PYROPHOSPHATE ENZYMES"/>
    <property type="match status" value="1"/>
</dbReference>
<dbReference type="Pfam" id="PF02775">
    <property type="entry name" value="TPP_enzyme_C"/>
    <property type="match status" value="1"/>
</dbReference>
<dbReference type="Pfam" id="PF00205">
    <property type="entry name" value="TPP_enzyme_M"/>
    <property type="match status" value="1"/>
</dbReference>
<dbReference type="Pfam" id="PF02776">
    <property type="entry name" value="TPP_enzyme_N"/>
    <property type="match status" value="1"/>
</dbReference>
<dbReference type="SUPFAM" id="SSF52467">
    <property type="entry name" value="DHS-like NAD/FAD-binding domain"/>
    <property type="match status" value="1"/>
</dbReference>
<dbReference type="SUPFAM" id="SSF52518">
    <property type="entry name" value="Thiamin diphosphate-binding fold (THDP-binding)"/>
    <property type="match status" value="2"/>
</dbReference>
<dbReference type="PROSITE" id="PS00187">
    <property type="entry name" value="TPP_ENZYMES"/>
    <property type="match status" value="1"/>
</dbReference>
<evidence type="ECO:0000250" key="1"/>
<evidence type="ECO:0000305" key="2"/>
<comment type="catalytic activity">
    <reaction>
        <text>2 pyruvate + H(+) = (2S)-2-acetolactate + CO2</text>
        <dbReference type="Rhea" id="RHEA:25249"/>
        <dbReference type="ChEBI" id="CHEBI:15361"/>
        <dbReference type="ChEBI" id="CHEBI:15378"/>
        <dbReference type="ChEBI" id="CHEBI:16526"/>
        <dbReference type="ChEBI" id="CHEBI:58476"/>
        <dbReference type="EC" id="2.2.1.6"/>
    </reaction>
</comment>
<comment type="cofactor">
    <cofactor evidence="1">
        <name>Mg(2+)</name>
        <dbReference type="ChEBI" id="CHEBI:18420"/>
    </cofactor>
    <text evidence="1">Binds 1 Mg(2+) ion per subunit.</text>
</comment>
<comment type="cofactor">
    <cofactor evidence="1">
        <name>thiamine diphosphate</name>
        <dbReference type="ChEBI" id="CHEBI:58937"/>
    </cofactor>
    <text evidence="1">Binds 1 thiamine pyrophosphate per subunit.</text>
</comment>
<comment type="pathway">
    <text>Amino-acid biosynthesis; L-isoleucine biosynthesis; L-isoleucine from 2-oxobutanoate: step 1/4.</text>
</comment>
<comment type="pathway">
    <text>Amino-acid biosynthesis; L-valine biosynthesis; L-valine from pyruvate: step 1/4.</text>
</comment>
<comment type="subunit">
    <text evidence="1">Dimer of large and small chains.</text>
</comment>
<comment type="subcellular location">
    <subcellularLocation>
        <location>Plastid</location>
        <location>Chloroplast</location>
    </subcellularLocation>
</comment>
<comment type="similarity">
    <text evidence="2">Belongs to the TPP enzyme family.</text>
</comment>
<name>ILVB_PORUM</name>
<protein>
    <recommendedName>
        <fullName>Acetolactate synthase large subunit</fullName>
        <shortName>AHAS</shortName>
        <ecNumber>2.2.1.6</ecNumber>
    </recommendedName>
    <alternativeName>
        <fullName>Acetohydroxy-acid synthase large subunit</fullName>
        <shortName>ALS</shortName>
    </alternativeName>
</protein>
<gene>
    <name type="primary">ilvB</name>
</gene>
<accession>P69684</accession>
<accession>P31594</accession>
<organism>
    <name type="scientific">Porphyra umbilicalis</name>
    <name type="common">Purple laver</name>
    <name type="synonym">Red alga</name>
    <dbReference type="NCBI Taxonomy" id="2786"/>
    <lineage>
        <taxon>Eukaryota</taxon>
        <taxon>Rhodophyta</taxon>
        <taxon>Bangiophyceae</taxon>
        <taxon>Bangiales</taxon>
        <taxon>Bangiaceae</taxon>
        <taxon>Porphyra</taxon>
    </lineage>
</organism>
<reference key="1">
    <citation type="journal article" date="1993" name="Curr. Genet.">
        <title>Two amino-acid biosynthetic genes are encoded on the plastid genome of the red alga Porphyra umbilicalis.</title>
        <authorList>
            <person name="Reith M."/>
            <person name="Munholland J.M."/>
        </authorList>
    </citation>
    <scope>NUCLEOTIDE SEQUENCE [GENOMIC DNA]</scope>
    <source>
        <strain>Avonport</strain>
    </source>
</reference>